<protein>
    <recommendedName>
        <fullName evidence="1">Eukaryotic translation initiation factor 3 subunit A</fullName>
        <shortName evidence="1">eIF3a</shortName>
    </recommendedName>
    <alternativeName>
        <fullName evidence="1">Eukaryotic translation initiation factor 3 subunit 10</fullName>
    </alternativeName>
</protein>
<comment type="function">
    <text evidence="1">RNA-binding component of the eukaryotic translation initiation factor 3 (eIF-3) complex, which is involved in protein synthesis of a specialized repertoire of mRNAs and, together with other initiation factors, stimulates binding of mRNA and methionyl-tRNAi to the 40S ribosome. The eIF-3 complex specifically targets and initiates translation of a subset of mRNAs involved in cell proliferation.</text>
</comment>
<comment type="subunit">
    <text evidence="1">Component of the eukaryotic translation initiation factor 3 (eIF-3) complex. The eIF-3 complex interacts with pix.</text>
</comment>
<comment type="subcellular location">
    <subcellularLocation>
        <location evidence="1">Cytoplasm</location>
    </subcellularLocation>
</comment>
<comment type="similarity">
    <text evidence="1">Belongs to the eIF-3 subunit A family.</text>
</comment>
<evidence type="ECO:0000255" key="1">
    <source>
        <dbReference type="HAMAP-Rule" id="MF_03000"/>
    </source>
</evidence>
<evidence type="ECO:0000255" key="2">
    <source>
        <dbReference type="PROSITE-ProRule" id="PRU01185"/>
    </source>
</evidence>
<evidence type="ECO:0000256" key="3">
    <source>
        <dbReference type="SAM" id="MobiDB-lite"/>
    </source>
</evidence>
<name>EIF3A_DROWI</name>
<proteinExistence type="inferred from homology"/>
<keyword id="KW-0963">Cytoplasm</keyword>
<keyword id="KW-0396">Initiation factor</keyword>
<keyword id="KW-0648">Protein biosynthesis</keyword>
<keyword id="KW-1185">Reference proteome</keyword>
<keyword id="KW-0694">RNA-binding</keyword>
<gene>
    <name evidence="1" type="primary">eIF3a</name>
    <name evidence="1" type="synonym">eIF3-S10</name>
    <name type="ORF">GK13753</name>
</gene>
<reference key="1">
    <citation type="journal article" date="2007" name="Nature">
        <title>Evolution of genes and genomes on the Drosophila phylogeny.</title>
        <authorList>
            <consortium name="Drosophila 12 genomes consortium"/>
        </authorList>
    </citation>
    <scope>NUCLEOTIDE SEQUENCE [LARGE SCALE GENOMIC DNA]</scope>
    <source>
        <strain>Tucson 14030-0811.24</strain>
    </source>
</reference>
<sequence>MARYTQRPENALKRANEFIEVGKPLRALDTLQEVFRNKRWNYAYSETVIEPLMFKYLYLCVELKKSHIAKEGLFQYRNMFQLVNVNSLENVIRGYLKMAEEHTEAAQAQSSAAVAVLELDDLDNIATPESILMSAVCGEDAQDRSDRTILLPWVKFLWESYCQCLELLRVNTHCETLYHDIARMAFQFCLKYNRKSEFRRLCDKLRKHLEDICKSSNQTTGVSINKVETQQLCLDTRLYLLDSAIQMELWQEAYKAIEDIHGLMALSKKTPVPKTMANYYQKLAMVFSKAGNQLFHAAALLKLFQLTRELKKNLTKDDLQRMAAHVLLATLSIPLPSAHPEFDRFIEADKSPLEKAQKLAILLGLPQPPTRVSLIREVVRLNVPQLVSEDFRNLYNWLEVDFNPLNLCQRIQSVVDTIESGPAETSLLTPYIQSLKDVTIMRLIRQISQVYESIEFKRLLELASFCNVFELEKLLVESVRHNDMQIRIDHQKHCIYFGTDLTESQREYRPDGPTLQSMPSEQIRSQLVNMSTVLTRAVSIVYPDREREQRAKLRTQMVHHYHEIKDREHQRILQRQKIIEDRKEFIEKQNNAREEEEARRQEEESRKAKLAEQKRLEQEQEERERKRHQNEIQAIREKSLKEKVQQISQTAHGKKMLSKLDEEGIKKLDAEQIAKRENEELQREAKELQSKLKSQEKKIDYFERAKRLEEIPLFEKYLTEKQVKDKEFWEATEQTRIENAITERKDAVSQQERLKRMYPDRDEYLEALKKERASLYLEKVEKFEIALEVERKKRLADRVIRRREERRQAHLREKEEERLRKEEEIRMAQAAEERAAAEARRLEREAEDEKRRAQYEKQRAKEEEAERKIKEDRDRLAREVAVERERSDKERDTWRPRGDRPEGRPSAAAGGGGASEWRRPAPTADRADRDRGADRDRGADRDRGADRDRGADRERGADRDRKDNEAGGASDSWRVRREPDSQRNAAPKDGGGSSGGAQPSRDDKWRRGGDRERDRDFRNDGQGPRRGGDREDDRDRGGFRRNDGPRRNEEQQRETGGNWRDAPRQSDNRDNRRPAGGDRRDRDRDVRGAGPKEGGGGGGGNWRTAPAPRDEKPTTKQRDQPQDKENKAGDDGEWTSVKRR</sequence>
<feature type="chain" id="PRO_0000366344" description="Eukaryotic translation initiation factor 3 subunit A">
    <location>
        <begin position="1"/>
        <end position="1140"/>
    </location>
</feature>
<feature type="domain" description="PCI" evidence="2">
    <location>
        <begin position="319"/>
        <end position="502"/>
    </location>
</feature>
<feature type="region of interest" description="Disordered" evidence="3">
    <location>
        <begin position="590"/>
        <end position="632"/>
    </location>
</feature>
<feature type="region of interest" description="Disordered" evidence="3">
    <location>
        <begin position="826"/>
        <end position="1140"/>
    </location>
</feature>
<feature type="compositionally biased region" description="Basic and acidic residues" evidence="3">
    <location>
        <begin position="590"/>
        <end position="624"/>
    </location>
</feature>
<feature type="compositionally biased region" description="Basic and acidic residues" evidence="3">
    <location>
        <begin position="826"/>
        <end position="903"/>
    </location>
</feature>
<feature type="compositionally biased region" description="Basic and acidic residues" evidence="3">
    <location>
        <begin position="925"/>
        <end position="965"/>
    </location>
</feature>
<feature type="compositionally biased region" description="Basic and acidic residues" evidence="3">
    <location>
        <begin position="1000"/>
        <end position="1019"/>
    </location>
</feature>
<feature type="compositionally biased region" description="Basic and acidic residues" evidence="3">
    <location>
        <begin position="1026"/>
        <end position="1053"/>
    </location>
</feature>
<feature type="compositionally biased region" description="Basic and acidic residues" evidence="3">
    <location>
        <begin position="1061"/>
        <end position="1087"/>
    </location>
</feature>
<feature type="compositionally biased region" description="Gly residues" evidence="3">
    <location>
        <begin position="1091"/>
        <end position="1101"/>
    </location>
</feature>
<feature type="compositionally biased region" description="Basic and acidic residues" evidence="3">
    <location>
        <begin position="1108"/>
        <end position="1130"/>
    </location>
</feature>
<accession>B4NIC3</accession>
<dbReference type="EMBL" id="CH964272">
    <property type="protein sequence ID" value="EDW83705.1"/>
    <property type="molecule type" value="Genomic_DNA"/>
</dbReference>
<dbReference type="SMR" id="B4NIC3"/>
<dbReference type="STRING" id="7260.B4NIC3"/>
<dbReference type="EnsemblMetazoa" id="FBtr0244404">
    <property type="protein sequence ID" value="FBpp0242896"/>
    <property type="gene ID" value="FBgn0215761"/>
</dbReference>
<dbReference type="EnsemblMetazoa" id="XM_002072683.4">
    <property type="protein sequence ID" value="XP_002072719.1"/>
    <property type="gene ID" value="LOC6650110"/>
</dbReference>
<dbReference type="GeneID" id="6650110"/>
<dbReference type="KEGG" id="dwi:6650110"/>
<dbReference type="CTD" id="8661"/>
<dbReference type="eggNOG" id="KOG2072">
    <property type="taxonomic scope" value="Eukaryota"/>
</dbReference>
<dbReference type="HOGENOM" id="CLU_002096_1_1_1"/>
<dbReference type="OMA" id="EHITNKR"/>
<dbReference type="OrthoDB" id="18884at2759"/>
<dbReference type="PhylomeDB" id="B4NIC3"/>
<dbReference type="ChiTaRS" id="eIF3-S10">
    <property type="organism name" value="fly"/>
</dbReference>
<dbReference type="Proteomes" id="UP000007798">
    <property type="component" value="Unassembled WGS sequence"/>
</dbReference>
<dbReference type="GO" id="GO:0016282">
    <property type="term" value="C:eukaryotic 43S preinitiation complex"/>
    <property type="evidence" value="ECO:0007669"/>
    <property type="project" value="UniProtKB-UniRule"/>
</dbReference>
<dbReference type="GO" id="GO:0033290">
    <property type="term" value="C:eukaryotic 48S preinitiation complex"/>
    <property type="evidence" value="ECO:0007669"/>
    <property type="project" value="UniProtKB-UniRule"/>
</dbReference>
<dbReference type="GO" id="GO:0005852">
    <property type="term" value="C:eukaryotic translation initiation factor 3 complex"/>
    <property type="evidence" value="ECO:0000250"/>
    <property type="project" value="UniProtKB"/>
</dbReference>
<dbReference type="GO" id="GO:0071540">
    <property type="term" value="C:eukaryotic translation initiation factor 3 complex, eIF3e"/>
    <property type="evidence" value="ECO:0007669"/>
    <property type="project" value="TreeGrafter"/>
</dbReference>
<dbReference type="GO" id="GO:0071541">
    <property type="term" value="C:eukaryotic translation initiation factor 3 complex, eIF3m"/>
    <property type="evidence" value="ECO:0007669"/>
    <property type="project" value="TreeGrafter"/>
</dbReference>
<dbReference type="GO" id="GO:0043614">
    <property type="term" value="C:multi-eIF complex"/>
    <property type="evidence" value="ECO:0007669"/>
    <property type="project" value="TreeGrafter"/>
</dbReference>
<dbReference type="GO" id="GO:0003729">
    <property type="term" value="F:mRNA binding"/>
    <property type="evidence" value="ECO:0007669"/>
    <property type="project" value="TreeGrafter"/>
</dbReference>
<dbReference type="GO" id="GO:0003743">
    <property type="term" value="F:translation initiation factor activity"/>
    <property type="evidence" value="ECO:0000250"/>
    <property type="project" value="UniProtKB"/>
</dbReference>
<dbReference type="GO" id="GO:0001732">
    <property type="term" value="P:formation of cytoplasmic translation initiation complex"/>
    <property type="evidence" value="ECO:0007669"/>
    <property type="project" value="UniProtKB-UniRule"/>
</dbReference>
<dbReference type="GO" id="GO:0006446">
    <property type="term" value="P:regulation of translational initiation"/>
    <property type="evidence" value="ECO:0000250"/>
    <property type="project" value="UniProtKB"/>
</dbReference>
<dbReference type="GO" id="GO:0002188">
    <property type="term" value="P:translation reinitiation"/>
    <property type="evidence" value="ECO:0007669"/>
    <property type="project" value="TreeGrafter"/>
</dbReference>
<dbReference type="FunFam" id="1.25.40.860:FF:000007">
    <property type="entry name" value="Eukaryotic translation initiation factor 3 subunit A"/>
    <property type="match status" value="1"/>
</dbReference>
<dbReference type="FunFam" id="4.10.860.10:FF:000001">
    <property type="entry name" value="Eukaryotic translation initiation factor 3 subunit A"/>
    <property type="match status" value="1"/>
</dbReference>
<dbReference type="Gene3D" id="1.25.40.860">
    <property type="match status" value="2"/>
</dbReference>
<dbReference type="Gene3D" id="4.10.860.10">
    <property type="entry name" value="UVR domain"/>
    <property type="match status" value="1"/>
</dbReference>
<dbReference type="HAMAP" id="MF_03000">
    <property type="entry name" value="eIF3a"/>
    <property type="match status" value="1"/>
</dbReference>
<dbReference type="InterPro" id="IPR027512">
    <property type="entry name" value="EIF3A"/>
</dbReference>
<dbReference type="InterPro" id="IPR054711">
    <property type="entry name" value="eIF3a_PCI_TPR-like"/>
</dbReference>
<dbReference type="InterPro" id="IPR000717">
    <property type="entry name" value="PCI_dom"/>
</dbReference>
<dbReference type="PANTHER" id="PTHR14005:SF0">
    <property type="entry name" value="EUKARYOTIC TRANSLATION INITIATION FACTOR 3 SUBUNIT A"/>
    <property type="match status" value="1"/>
</dbReference>
<dbReference type="PANTHER" id="PTHR14005">
    <property type="entry name" value="EUKARYOTIC TRANSLATION INITIATION FACTOR 3, THETA SUBUNIT"/>
    <property type="match status" value="1"/>
</dbReference>
<dbReference type="Pfam" id="PF22591">
    <property type="entry name" value="eIF3a_PCI_TPR-like"/>
    <property type="match status" value="1"/>
</dbReference>
<dbReference type="Pfam" id="PF01399">
    <property type="entry name" value="PCI"/>
    <property type="match status" value="1"/>
</dbReference>
<dbReference type="SMART" id="SM00088">
    <property type="entry name" value="PINT"/>
    <property type="match status" value="1"/>
</dbReference>
<dbReference type="PROSITE" id="PS50250">
    <property type="entry name" value="PCI"/>
    <property type="match status" value="1"/>
</dbReference>
<organism>
    <name type="scientific">Drosophila willistoni</name>
    <name type="common">Fruit fly</name>
    <dbReference type="NCBI Taxonomy" id="7260"/>
    <lineage>
        <taxon>Eukaryota</taxon>
        <taxon>Metazoa</taxon>
        <taxon>Ecdysozoa</taxon>
        <taxon>Arthropoda</taxon>
        <taxon>Hexapoda</taxon>
        <taxon>Insecta</taxon>
        <taxon>Pterygota</taxon>
        <taxon>Neoptera</taxon>
        <taxon>Endopterygota</taxon>
        <taxon>Diptera</taxon>
        <taxon>Brachycera</taxon>
        <taxon>Muscomorpha</taxon>
        <taxon>Ephydroidea</taxon>
        <taxon>Drosophilidae</taxon>
        <taxon>Drosophila</taxon>
        <taxon>Sophophora</taxon>
    </lineage>
</organism>